<comment type="function">
    <text evidence="1">Catalyzes the anti-1,4-elimination of the C-3 phosphate and the C-6 proR hydrogen from 5-enolpyruvylshikimate-3-phosphate (EPSP) to yield chorismate, which is the branch point compound that serves as the starting substrate for the three terminal pathways of aromatic amino acid biosynthesis. This reaction introduces a second double bond into the aromatic ring system.</text>
</comment>
<comment type="catalytic activity">
    <reaction evidence="1">
        <text>5-O-(1-carboxyvinyl)-3-phosphoshikimate = chorismate + phosphate</text>
        <dbReference type="Rhea" id="RHEA:21020"/>
        <dbReference type="ChEBI" id="CHEBI:29748"/>
        <dbReference type="ChEBI" id="CHEBI:43474"/>
        <dbReference type="ChEBI" id="CHEBI:57701"/>
        <dbReference type="EC" id="4.2.3.5"/>
    </reaction>
</comment>
<comment type="cofactor">
    <cofactor evidence="1">
        <name>FMNH2</name>
        <dbReference type="ChEBI" id="CHEBI:57618"/>
    </cofactor>
    <text evidence="1">Reduced FMN (FMNH(2)).</text>
</comment>
<comment type="pathway">
    <text evidence="1">Metabolic intermediate biosynthesis; chorismate biosynthesis; chorismate from D-erythrose 4-phosphate and phosphoenolpyruvate: step 7/7.</text>
</comment>
<comment type="subunit">
    <text evidence="1">Homotetramer.</text>
</comment>
<comment type="similarity">
    <text evidence="1">Belongs to the chorismate synthase family.</text>
</comment>
<dbReference type="EC" id="4.2.3.5" evidence="1"/>
<dbReference type="EMBL" id="CP000308">
    <property type="protein sequence ID" value="ABG14058.1"/>
    <property type="molecule type" value="Genomic_DNA"/>
</dbReference>
<dbReference type="RefSeq" id="WP_002209711.1">
    <property type="nucleotide sequence ID" value="NZ_CP009906.1"/>
</dbReference>
<dbReference type="SMR" id="Q1C664"/>
<dbReference type="GeneID" id="57975938"/>
<dbReference type="KEGG" id="ypa:YPA_2092"/>
<dbReference type="UniPathway" id="UPA00053">
    <property type="reaction ID" value="UER00090"/>
</dbReference>
<dbReference type="Proteomes" id="UP000001971">
    <property type="component" value="Chromosome"/>
</dbReference>
<dbReference type="GO" id="GO:0005829">
    <property type="term" value="C:cytosol"/>
    <property type="evidence" value="ECO:0007669"/>
    <property type="project" value="TreeGrafter"/>
</dbReference>
<dbReference type="GO" id="GO:0004107">
    <property type="term" value="F:chorismate synthase activity"/>
    <property type="evidence" value="ECO:0007669"/>
    <property type="project" value="UniProtKB-UniRule"/>
</dbReference>
<dbReference type="GO" id="GO:0010181">
    <property type="term" value="F:FMN binding"/>
    <property type="evidence" value="ECO:0007669"/>
    <property type="project" value="TreeGrafter"/>
</dbReference>
<dbReference type="GO" id="GO:0008652">
    <property type="term" value="P:amino acid biosynthetic process"/>
    <property type="evidence" value="ECO:0007669"/>
    <property type="project" value="UniProtKB-KW"/>
</dbReference>
<dbReference type="GO" id="GO:0009073">
    <property type="term" value="P:aromatic amino acid family biosynthetic process"/>
    <property type="evidence" value="ECO:0007669"/>
    <property type="project" value="UniProtKB-KW"/>
</dbReference>
<dbReference type="GO" id="GO:0009423">
    <property type="term" value="P:chorismate biosynthetic process"/>
    <property type="evidence" value="ECO:0007669"/>
    <property type="project" value="UniProtKB-UniRule"/>
</dbReference>
<dbReference type="CDD" id="cd07304">
    <property type="entry name" value="Chorismate_synthase"/>
    <property type="match status" value="1"/>
</dbReference>
<dbReference type="FunFam" id="3.60.150.10:FF:000001">
    <property type="entry name" value="Chorismate synthase"/>
    <property type="match status" value="1"/>
</dbReference>
<dbReference type="Gene3D" id="3.60.150.10">
    <property type="entry name" value="Chorismate synthase AroC"/>
    <property type="match status" value="1"/>
</dbReference>
<dbReference type="HAMAP" id="MF_00300">
    <property type="entry name" value="Chorismate_synth"/>
    <property type="match status" value="1"/>
</dbReference>
<dbReference type="InterPro" id="IPR000453">
    <property type="entry name" value="Chorismate_synth"/>
</dbReference>
<dbReference type="InterPro" id="IPR035904">
    <property type="entry name" value="Chorismate_synth_AroC_sf"/>
</dbReference>
<dbReference type="InterPro" id="IPR020541">
    <property type="entry name" value="Chorismate_synthase_CS"/>
</dbReference>
<dbReference type="NCBIfam" id="TIGR00033">
    <property type="entry name" value="aroC"/>
    <property type="match status" value="1"/>
</dbReference>
<dbReference type="NCBIfam" id="NF003793">
    <property type="entry name" value="PRK05382.1"/>
    <property type="match status" value="1"/>
</dbReference>
<dbReference type="PANTHER" id="PTHR21085">
    <property type="entry name" value="CHORISMATE SYNTHASE"/>
    <property type="match status" value="1"/>
</dbReference>
<dbReference type="PANTHER" id="PTHR21085:SF0">
    <property type="entry name" value="CHORISMATE SYNTHASE"/>
    <property type="match status" value="1"/>
</dbReference>
<dbReference type="Pfam" id="PF01264">
    <property type="entry name" value="Chorismate_synt"/>
    <property type="match status" value="1"/>
</dbReference>
<dbReference type="PIRSF" id="PIRSF001456">
    <property type="entry name" value="Chorismate_synth"/>
    <property type="match status" value="1"/>
</dbReference>
<dbReference type="SUPFAM" id="SSF103263">
    <property type="entry name" value="Chorismate synthase, AroC"/>
    <property type="match status" value="1"/>
</dbReference>
<dbReference type="PROSITE" id="PS00787">
    <property type="entry name" value="CHORISMATE_SYNTHASE_1"/>
    <property type="match status" value="1"/>
</dbReference>
<dbReference type="PROSITE" id="PS00788">
    <property type="entry name" value="CHORISMATE_SYNTHASE_2"/>
    <property type="match status" value="1"/>
</dbReference>
<dbReference type="PROSITE" id="PS00789">
    <property type="entry name" value="CHORISMATE_SYNTHASE_3"/>
    <property type="match status" value="1"/>
</dbReference>
<organism>
    <name type="scientific">Yersinia pestis bv. Antiqua (strain Antiqua)</name>
    <dbReference type="NCBI Taxonomy" id="360102"/>
    <lineage>
        <taxon>Bacteria</taxon>
        <taxon>Pseudomonadati</taxon>
        <taxon>Pseudomonadota</taxon>
        <taxon>Gammaproteobacteria</taxon>
        <taxon>Enterobacterales</taxon>
        <taxon>Yersiniaceae</taxon>
        <taxon>Yersinia</taxon>
    </lineage>
</organism>
<name>AROC_YERPA</name>
<sequence length="361" mass="38982">MAGNSIGQFFRVTTFGESHGIALGCIIDGVPPGIPITEADIQLDLDRRRPGTSRYTTQRRELDQVRILSGVFEGVTTGTSIGLMIENTDQRSQDYSAIKDVFRPGHADYTYEQKYGVRDYRGGGRSSARETAMRVAAGAIAKKYLAQKFGVQVRGYLAQMGDVSCDLLDWDLVEQNPFFCPDASKLEPLDALMRELKKAGDSIGAKITVVAENVPVGLGEPVFDRLDADLAHALMSINAVKGVEIGDGFAVVTKRGSENRDEITPQGFQSNHAGGILGGISSGQPVVAHIALKPTSSIMVPGQTINRQGEAVEMVTRGRHDPCVGIRAVPIAEAMMAIVLMDHLLRQRAQCGDVASDVPRW</sequence>
<reference key="1">
    <citation type="journal article" date="2006" name="J. Bacteriol.">
        <title>Complete genome sequence of Yersinia pestis strains Antiqua and Nepal516: evidence of gene reduction in an emerging pathogen.</title>
        <authorList>
            <person name="Chain P.S.G."/>
            <person name="Hu P."/>
            <person name="Malfatti S.A."/>
            <person name="Radnedge L."/>
            <person name="Larimer F."/>
            <person name="Vergez L.M."/>
            <person name="Worsham P."/>
            <person name="Chu M.C."/>
            <person name="Andersen G.L."/>
        </authorList>
    </citation>
    <scope>NUCLEOTIDE SEQUENCE [LARGE SCALE GENOMIC DNA]</scope>
    <source>
        <strain>Antiqua</strain>
    </source>
</reference>
<feature type="chain" id="PRO_0000256363" description="Chorismate synthase">
    <location>
        <begin position="1"/>
        <end position="361"/>
    </location>
</feature>
<feature type="binding site" evidence="1">
    <location>
        <position position="48"/>
    </location>
    <ligand>
        <name>NADP(+)</name>
        <dbReference type="ChEBI" id="CHEBI:58349"/>
    </ligand>
</feature>
<feature type="binding site" evidence="1">
    <location>
        <position position="54"/>
    </location>
    <ligand>
        <name>NADP(+)</name>
        <dbReference type="ChEBI" id="CHEBI:58349"/>
    </ligand>
</feature>
<feature type="binding site" evidence="1">
    <location>
        <begin position="125"/>
        <end position="127"/>
    </location>
    <ligand>
        <name>FMN</name>
        <dbReference type="ChEBI" id="CHEBI:58210"/>
    </ligand>
</feature>
<feature type="binding site" evidence="1">
    <location>
        <begin position="238"/>
        <end position="239"/>
    </location>
    <ligand>
        <name>FMN</name>
        <dbReference type="ChEBI" id="CHEBI:58210"/>
    </ligand>
</feature>
<feature type="binding site" evidence="1">
    <location>
        <position position="278"/>
    </location>
    <ligand>
        <name>FMN</name>
        <dbReference type="ChEBI" id="CHEBI:58210"/>
    </ligand>
</feature>
<feature type="binding site" evidence="1">
    <location>
        <begin position="293"/>
        <end position="297"/>
    </location>
    <ligand>
        <name>FMN</name>
        <dbReference type="ChEBI" id="CHEBI:58210"/>
    </ligand>
</feature>
<feature type="binding site" evidence="1">
    <location>
        <position position="319"/>
    </location>
    <ligand>
        <name>FMN</name>
        <dbReference type="ChEBI" id="CHEBI:58210"/>
    </ligand>
</feature>
<keyword id="KW-0028">Amino-acid biosynthesis</keyword>
<keyword id="KW-0057">Aromatic amino acid biosynthesis</keyword>
<keyword id="KW-0274">FAD</keyword>
<keyword id="KW-0285">Flavoprotein</keyword>
<keyword id="KW-0288">FMN</keyword>
<keyword id="KW-0456">Lyase</keyword>
<keyword id="KW-0521">NADP</keyword>
<protein>
    <recommendedName>
        <fullName evidence="1">Chorismate synthase</fullName>
        <shortName evidence="1">CS</shortName>
        <ecNumber evidence="1">4.2.3.5</ecNumber>
    </recommendedName>
    <alternativeName>
        <fullName evidence="1">5-enolpyruvylshikimate-3-phosphate phospholyase</fullName>
    </alternativeName>
</protein>
<accession>Q1C664</accession>
<evidence type="ECO:0000255" key="1">
    <source>
        <dbReference type="HAMAP-Rule" id="MF_00300"/>
    </source>
</evidence>
<proteinExistence type="inferred from homology"/>
<gene>
    <name evidence="1" type="primary">aroC</name>
    <name type="ordered locus">YPA_2092</name>
</gene>